<name>KR132_HUMAN</name>
<evidence type="ECO:0000250" key="1"/>
<evidence type="ECO:0000305" key="2"/>
<accession>Q52LG2</accession>
<keyword id="KW-0416">Keratin</keyword>
<keyword id="KW-1267">Proteomics identification</keyword>
<keyword id="KW-1185">Reference proteome</keyword>
<keyword id="KW-0677">Repeat</keyword>
<sequence>MSYNCCSGNFSSRSCGDYLRYPASSRGFSYPSNLVYSTDLCSPSTCQLGSSLYRGCQEICWEPTSCQTSYVESSPCQTSCYRPRTSLLCSPCKTTYSGSLGFGSSSCRSLGYGSRSCYSVGCGSSGVRSLGYGSCGFPSLGYGSGFCRPTYLASRSCQSPCYRPAYGSTFCRSTC</sequence>
<protein>
    <recommendedName>
        <fullName>Keratin-associated protein 13-2</fullName>
    </recommendedName>
</protein>
<proteinExistence type="evidence at protein level"/>
<comment type="function">
    <text evidence="1">In the hair cortex, hair keratin intermediate filaments are embedded in an interfilamentous matrix, consisting of hair keratin-associated proteins (KRTAP), which are essential for the formation of a rigid and resistant hair shaft through their extensive disulfide bond cross-linking with abundant cysteine residues of hair keratins. The matrix proteins include the high-sulfur and high-glycine-tyrosine keratins (By similarity).</text>
</comment>
<comment type="subunit">
    <text evidence="1">Interacts with hair keratins.</text>
</comment>
<comment type="interaction">
    <interactant intactId="EBI-11953846">
        <id>Q52LG2</id>
    </interactant>
    <interactant intactId="EBI-12224467">
        <id>Q9NYG5-2</id>
        <label>ANAPC11</label>
    </interactant>
    <organismsDiffer>false</organismsDiffer>
    <experiments>3</experiments>
</comment>
<comment type="interaction">
    <interactant intactId="EBI-11953846">
        <id>Q52LG2</id>
    </interactant>
    <interactant intactId="EBI-715243">
        <id>P50995</id>
        <label>ANXA11</label>
    </interactant>
    <organismsDiffer>false</organismsDiffer>
    <experiments>3</experiments>
</comment>
<comment type="interaction">
    <interactant intactId="EBI-11953846">
        <id>Q52LG2</id>
    </interactant>
    <interactant intactId="EBI-765407">
        <id>P41182</id>
        <label>BCL6</label>
    </interactant>
    <organismsDiffer>false</organismsDiffer>
    <experiments>3</experiments>
</comment>
<comment type="interaction">
    <interactant intactId="EBI-11953846">
        <id>Q52LG2</id>
    </interactant>
    <interactant intactId="EBI-7317823">
        <id>Q6P5X5</id>
        <label>C22orf39</label>
    </interactant>
    <organismsDiffer>false</organismsDiffer>
    <experiments>3</experiments>
</comment>
<comment type="interaction">
    <interactant intactId="EBI-11953846">
        <id>Q52LG2</id>
    </interactant>
    <interactant intactId="EBI-11954144">
        <id>O43439-4</id>
        <label>CBFA2T2</label>
    </interactant>
    <organismsDiffer>false</organismsDiffer>
    <experiments>3</experiments>
</comment>
<comment type="interaction">
    <interactant intactId="EBI-11953846">
        <id>Q52LG2</id>
    </interactant>
    <interactant intactId="EBI-11977221">
        <id>Q86Z20</id>
        <label>CCDC125</label>
    </interactant>
    <organismsDiffer>false</organismsDiffer>
    <experiments>3</experiments>
</comment>
<comment type="interaction">
    <interactant intactId="EBI-11953846">
        <id>Q52LG2</id>
    </interactant>
    <interactant intactId="EBI-1104933">
        <id>Q8N4L8</id>
        <label>CCDC24</label>
    </interactant>
    <organismsDiffer>false</organismsDiffer>
    <experiments>3</experiments>
</comment>
<comment type="interaction">
    <interactant intactId="EBI-11953846">
        <id>Q52LG2</id>
    </interactant>
    <interactant intactId="EBI-10961624">
        <id>Q2TAC2-2</id>
        <label>CCDC57</label>
    </interactant>
    <organismsDiffer>false</organismsDiffer>
    <experiments>3</experiments>
</comment>
<comment type="interaction">
    <interactant intactId="EBI-11953846">
        <id>Q52LG2</id>
    </interactant>
    <interactant intactId="EBI-12010594">
        <id>O75909-2</id>
        <label>CCNK</label>
    </interactant>
    <organismsDiffer>false</organismsDiffer>
    <experiments>3</experiments>
</comment>
<comment type="interaction">
    <interactant intactId="EBI-11953846">
        <id>Q52LG2</id>
    </interactant>
    <interactant intactId="EBI-718615">
        <id>Q9H5F2</id>
        <label>CFAP68</label>
    </interactant>
    <organismsDiffer>false</organismsDiffer>
    <experiments>3</experiments>
</comment>
<comment type="interaction">
    <interactant intactId="EBI-11953846">
        <id>Q52LG2</id>
    </interactant>
    <interactant intactId="EBI-7043337">
        <id>P05813</id>
        <label>CRYBA1</label>
    </interactant>
    <organismsDiffer>false</organismsDiffer>
    <experiments>3</experiments>
</comment>
<comment type="interaction">
    <interactant intactId="EBI-11953846">
        <id>Q52LG2</id>
    </interactant>
    <interactant intactId="EBI-12842046">
        <id>A8MUP2</id>
        <label>CSKMT</label>
    </interactant>
    <organismsDiffer>false</organismsDiffer>
    <experiments>3</experiments>
</comment>
<comment type="interaction">
    <interactant intactId="EBI-11953846">
        <id>Q52LG2</id>
    </interactant>
    <interactant intactId="EBI-3867333">
        <id>A8MQ03</id>
        <label>CYSRT1</label>
    </interactant>
    <organismsDiffer>false</organismsDiffer>
    <experiments>3</experiments>
</comment>
<comment type="interaction">
    <interactant intactId="EBI-11953846">
        <id>Q52LG2</id>
    </interactant>
    <interactant intactId="EBI-744099">
        <id>Q9H0I2</id>
        <label>ENKD1</label>
    </interactant>
    <organismsDiffer>false</organismsDiffer>
    <experiments>3</experiments>
</comment>
<comment type="interaction">
    <interactant intactId="EBI-11953846">
        <id>Q52LG2</id>
    </interactant>
    <interactant intactId="EBI-946972">
        <id>Q9UM22</id>
        <label>EPDR1</label>
    </interactant>
    <organismsDiffer>false</organismsDiffer>
    <experiments>3</experiments>
</comment>
<comment type="interaction">
    <interactant intactId="EBI-11953846">
        <id>Q52LG2</id>
    </interactant>
    <interactant intactId="EBI-2870454">
        <id>Q16134</id>
        <label>ETFDH</label>
    </interactant>
    <organismsDiffer>false</organismsDiffer>
    <experiments>3</experiments>
</comment>
<comment type="interaction">
    <interactant intactId="EBI-11953846">
        <id>Q52LG2</id>
    </interactant>
    <interactant intactId="EBI-2339898">
        <id>Q9NW38</id>
        <label>FANCL</label>
    </interactant>
    <organismsDiffer>false</organismsDiffer>
    <experiments>3</experiments>
</comment>
<comment type="interaction">
    <interactant intactId="EBI-11953846">
        <id>Q52LG2</id>
    </interactant>
    <interactant intactId="EBI-2510157">
        <id>Q96EF6</id>
        <label>FBXO17</label>
    </interactant>
    <organismsDiffer>false</organismsDiffer>
    <experiments>3</experiments>
</comment>
<comment type="interaction">
    <interactant intactId="EBI-11953846">
        <id>Q52LG2</id>
    </interactant>
    <interactant intactId="EBI-11977403">
        <id>A0A0C3SFZ9</id>
        <label>FCHO1</label>
    </interactant>
    <organismsDiffer>false</organismsDiffer>
    <experiments>3</experiments>
</comment>
<comment type="interaction">
    <interactant intactId="EBI-11953846">
        <id>Q52LG2</id>
    </interactant>
    <interactant intactId="EBI-6672518">
        <id>P23771-2</id>
        <label>GATA3</label>
    </interactant>
    <organismsDiffer>false</organismsDiffer>
    <experiments>3</experiments>
</comment>
<comment type="interaction">
    <interactant intactId="EBI-11953846">
        <id>Q52LG2</id>
    </interactant>
    <interactant intactId="EBI-356700">
        <id>P57678</id>
        <label>GEMIN4</label>
    </interactant>
    <organismsDiffer>false</organismsDiffer>
    <experiments>3</experiments>
</comment>
<comment type="interaction">
    <interactant intactId="EBI-11953846">
        <id>Q52LG2</id>
    </interactant>
    <interactant intactId="EBI-11975289">
        <id>Q9Y223-2</id>
        <label>GNE</label>
    </interactant>
    <organismsDiffer>false</organismsDiffer>
    <experiments>3</experiments>
</comment>
<comment type="interaction">
    <interactant intactId="EBI-11953846">
        <id>Q52LG2</id>
    </interactant>
    <interactant intactId="EBI-713355">
        <id>Q13227</id>
        <label>GPS2</label>
    </interactant>
    <organismsDiffer>false</organismsDiffer>
    <experiments>3</experiments>
</comment>
<comment type="interaction">
    <interactant intactId="EBI-11953846">
        <id>Q52LG2</id>
    </interactant>
    <interactant intactId="EBI-747754">
        <id>P28799</id>
        <label>GRN</label>
    </interactant>
    <organismsDiffer>false</organismsDiffer>
    <experiments>3</experiments>
</comment>
<comment type="interaction">
    <interactant intactId="EBI-11953846">
        <id>Q52LG2</id>
    </interactant>
    <interactant intactId="EBI-351590">
        <id>P31943</id>
        <label>HNRNPH1</label>
    </interactant>
    <organismsDiffer>false</organismsDiffer>
    <experiments>3</experiments>
</comment>
<comment type="interaction">
    <interactant intactId="EBI-11953846">
        <id>Q52LG2</id>
    </interactant>
    <interactant intactId="EBI-740785">
        <id>P49639</id>
        <label>HOXA1</label>
    </interactant>
    <organismsDiffer>false</organismsDiffer>
    <experiments>5</experiments>
</comment>
<comment type="interaction">
    <interactant intactId="EBI-11953846">
        <id>Q52LG2</id>
    </interactant>
    <interactant intactId="EBI-2880706">
        <id>O43593</id>
        <label>HR</label>
    </interactant>
    <organismsDiffer>false</organismsDiffer>
    <experiments>3</experiments>
</comment>
<comment type="interaction">
    <interactant intactId="EBI-11953846">
        <id>Q52LG2</id>
    </interactant>
    <interactant intactId="EBI-4397613">
        <id>Q7L273</id>
        <label>KCTD9</label>
    </interactant>
    <organismsDiffer>false</organismsDiffer>
    <experiments>3</experiments>
</comment>
<comment type="interaction">
    <interactant intactId="EBI-11953846">
        <id>Q52LG2</id>
    </interactant>
    <interactant intactId="EBI-6426443">
        <id>Q2WGJ6</id>
        <label>KLHL38</label>
    </interactant>
    <organismsDiffer>false</organismsDiffer>
    <experiments>3</experiments>
</comment>
<comment type="interaction">
    <interactant intactId="EBI-11953846">
        <id>Q52LG2</id>
    </interactant>
    <interactant intactId="EBI-10981970">
        <id>Q5T749</id>
        <label>KPRP</label>
    </interactant>
    <organismsDiffer>false</organismsDiffer>
    <experiments>3</experiments>
</comment>
<comment type="interaction">
    <interactant intactId="EBI-11953846">
        <id>Q52LG2</id>
    </interactant>
    <interactant intactId="EBI-2430095">
        <id>P12035</id>
        <label>KRT3</label>
    </interactant>
    <organismsDiffer>false</organismsDiffer>
    <experiments>3</experiments>
</comment>
<comment type="interaction">
    <interactant intactId="EBI-11953846">
        <id>Q52LG2</id>
    </interactant>
    <interactant intactId="EBI-11959885">
        <id>Q07627</id>
        <label>KRTAP1-1</label>
    </interactant>
    <organismsDiffer>false</organismsDiffer>
    <experiments>3</experiments>
</comment>
<comment type="interaction">
    <interactant intactId="EBI-11953846">
        <id>Q52LG2</id>
    </interactant>
    <interactant intactId="EBI-10172150">
        <id>P60370</id>
        <label>KRTAP10-5</label>
    </interactant>
    <organismsDiffer>false</organismsDiffer>
    <experiments>3</experiments>
</comment>
<comment type="interaction">
    <interactant intactId="EBI-11953846">
        <id>Q52LG2</id>
    </interactant>
    <interactant intactId="EBI-1052037">
        <id>Q8IUC1</id>
        <label>KRTAP11-1</label>
    </interactant>
    <organismsDiffer>false</organismsDiffer>
    <experiments>3</experiments>
</comment>
<comment type="interaction">
    <interactant intactId="EBI-11953846">
        <id>Q52LG2</id>
    </interactant>
    <interactant intactId="EBI-10176379">
        <id>P59991</id>
        <label>KRTAP12-2</label>
    </interactant>
    <organismsDiffer>false</organismsDiffer>
    <experiments>3</experiments>
</comment>
<comment type="interaction">
    <interactant intactId="EBI-11953846">
        <id>Q52LG2</id>
    </interactant>
    <interactant intactId="EBI-11953334">
        <id>P60328</id>
        <label>KRTAP12-3</label>
    </interactant>
    <organismsDiffer>false</organismsDiffer>
    <experiments>3</experiments>
</comment>
<comment type="interaction">
    <interactant intactId="EBI-11953846">
        <id>Q52LG2</id>
    </interactant>
    <interactant intactId="EBI-11992140">
        <id>Q3LI76</id>
        <label>KRTAP15-1</label>
    </interactant>
    <organismsDiffer>false</organismsDiffer>
    <experiments>3</experiments>
</comment>
<comment type="interaction">
    <interactant intactId="EBI-11953846">
        <id>Q52LG2</id>
    </interactant>
    <interactant intactId="EBI-3957672">
        <id>Q6PEX3</id>
        <label>KRTAP26-1</label>
    </interactant>
    <organismsDiffer>false</organismsDiffer>
    <experiments>3</experiments>
</comment>
<comment type="interaction">
    <interactant intactId="EBI-11953846">
        <id>Q52LG2</id>
    </interactant>
    <interactant intactId="EBI-9996449">
        <id>Q9BYR8</id>
        <label>KRTAP3-1</label>
    </interactant>
    <organismsDiffer>false</organismsDiffer>
    <experiments>3</experiments>
</comment>
<comment type="interaction">
    <interactant intactId="EBI-11953846">
        <id>Q52LG2</id>
    </interactant>
    <interactant intactId="EBI-3957694">
        <id>Q9BYR6</id>
        <label>KRTAP3-3</label>
    </interactant>
    <organismsDiffer>false</organismsDiffer>
    <experiments>3</experiments>
</comment>
<comment type="interaction">
    <interactant intactId="EBI-11953846">
        <id>Q52LG2</id>
    </interactant>
    <interactant intactId="EBI-11958132">
        <id>Q9BYR3</id>
        <label>KRTAP4-4</label>
    </interactant>
    <organismsDiffer>false</organismsDiffer>
    <experiments>3</experiments>
</comment>
<comment type="interaction">
    <interactant intactId="EBI-11953846">
        <id>Q52LG2</id>
    </interactant>
    <interactant intactId="EBI-11993254">
        <id>Q9BYR2</id>
        <label>KRTAP4-5</label>
    </interactant>
    <organismsDiffer>false</organismsDiffer>
    <experiments>3</experiments>
</comment>
<comment type="interaction">
    <interactant intactId="EBI-11953846">
        <id>Q52LG2</id>
    </interactant>
    <interactant intactId="EBI-1044640">
        <id>Q9BYQ4</id>
        <label>KRTAP9-2</label>
    </interactant>
    <organismsDiffer>false</organismsDiffer>
    <experiments>3</experiments>
</comment>
<comment type="interaction">
    <interactant intactId="EBI-11953846">
        <id>Q52LG2</id>
    </interactant>
    <interactant intactId="EBI-746778">
        <id>Q96A72</id>
        <label>MAGOHB</label>
    </interactant>
    <organismsDiffer>false</organismsDiffer>
    <experiments>3</experiments>
</comment>
<comment type="interaction">
    <interactant intactId="EBI-11953846">
        <id>Q52LG2</id>
    </interactant>
    <interactant intactId="EBI-16439278">
        <id>Q6FHY5</id>
        <label>MEOX2</label>
    </interactant>
    <organismsDiffer>false</organismsDiffer>
    <experiments>3</experiments>
</comment>
<comment type="interaction">
    <interactant intactId="EBI-11953846">
        <id>Q52LG2</id>
    </interactant>
    <interactant intactId="EBI-1752987">
        <id>Q86SG6</id>
        <label>NEK8</label>
    </interactant>
    <organismsDiffer>false</organismsDiffer>
    <experiments>3</experiments>
</comment>
<comment type="interaction">
    <interactant intactId="EBI-11953846">
        <id>Q52LG2</id>
    </interactant>
    <interactant intactId="EBI-12868744">
        <id>P0CG21</id>
        <label>NHLRC4</label>
    </interactant>
    <organismsDiffer>false</organismsDiffer>
    <experiments>3</experiments>
</comment>
<comment type="interaction">
    <interactant intactId="EBI-11953846">
        <id>Q52LG2</id>
    </interactant>
    <interactant intactId="EBI-22310682">
        <id>P0DPK4</id>
        <label>NOTCH2NLC</label>
    </interactant>
    <organismsDiffer>false</organismsDiffer>
    <experiments>3</experiments>
</comment>
<comment type="interaction">
    <interactant intactId="EBI-11953846">
        <id>Q52LG2</id>
    </interactant>
    <interactant intactId="EBI-536879">
        <id>O43482</id>
        <label>OIP5</label>
    </interactant>
    <organismsDiffer>false</organismsDiffer>
    <experiments>3</experiments>
</comment>
<comment type="interaction">
    <interactant intactId="EBI-11953846">
        <id>Q52LG2</id>
    </interactant>
    <interactant intactId="EBI-740446">
        <id>P32242</id>
        <label>OTX1</label>
    </interactant>
    <organismsDiffer>false</organismsDiffer>
    <experiments>3</experiments>
</comment>
<comment type="interaction">
    <interactant intactId="EBI-11953846">
        <id>Q52LG2</id>
    </interactant>
    <interactant intactId="EBI-395883">
        <id>P07237</id>
        <label>P4HB</label>
    </interactant>
    <organismsDiffer>false</organismsDiffer>
    <experiments>3</experiments>
</comment>
<comment type="interaction">
    <interactant intactId="EBI-11953846">
        <id>Q52LG2</id>
    </interactant>
    <interactant intactId="EBI-11022007">
        <id>Q9HBE1-4</id>
        <label>PATZ1</label>
    </interactant>
    <organismsDiffer>false</organismsDiffer>
    <experiments>3</experiments>
</comment>
<comment type="interaction">
    <interactant intactId="EBI-11953846">
        <id>Q52LG2</id>
    </interactant>
    <interactant intactId="EBI-14131832">
        <id>Q8N4B1-4</id>
        <label>PHETA1</label>
    </interactant>
    <organismsDiffer>false</organismsDiffer>
    <experiments>3</experiments>
</comment>
<comment type="interaction">
    <interactant intactId="EBI-11953846">
        <id>Q52LG2</id>
    </interactant>
    <interactant intactId="EBI-748265">
        <id>P78337</id>
        <label>PITX1</label>
    </interactant>
    <organismsDiffer>false</organismsDiffer>
    <experiments>3</experiments>
</comment>
<comment type="interaction">
    <interactant intactId="EBI-11953846">
        <id>Q52LG2</id>
    </interactant>
    <interactant intactId="EBI-943588">
        <id>Q16633</id>
        <label>POU2AF1</label>
    </interactant>
    <organismsDiffer>false</organismsDiffer>
    <experiments>3</experiments>
</comment>
<comment type="interaction">
    <interactant intactId="EBI-11953846">
        <id>Q52LG2</id>
    </interactant>
    <interactant intactId="EBI-10253121">
        <id>Q6P9E2</id>
        <label>RECK</label>
    </interactant>
    <organismsDiffer>false</organismsDiffer>
    <experiments>3</experiments>
</comment>
<comment type="interaction">
    <interactant intactId="EBI-11953846">
        <id>Q52LG2</id>
    </interactant>
    <interactant intactId="EBI-372094">
        <id>Q9BQY4</id>
        <label>RHOXF2</label>
    </interactant>
    <organismsDiffer>false</organismsDiffer>
    <experiments>3</experiments>
</comment>
<comment type="interaction">
    <interactant intactId="EBI-11953846">
        <id>Q52LG2</id>
    </interactant>
    <interactant intactId="EBI-12000762">
        <id>Q7Z5V6-2</id>
        <label>SAXO4</label>
    </interactant>
    <organismsDiffer>false</organismsDiffer>
    <experiments>3</experiments>
</comment>
<comment type="interaction">
    <interactant intactId="EBI-11953846">
        <id>Q52LG2</id>
    </interactant>
    <interactant intactId="EBI-6269587">
        <id>Q9H1K4</id>
        <label>SLC25A18</label>
    </interactant>
    <organismsDiffer>false</organismsDiffer>
    <experiments>3</experiments>
</comment>
<comment type="interaction">
    <interactant intactId="EBI-11953846">
        <id>Q52LG2</id>
    </interactant>
    <interactant intactId="EBI-947791">
        <id>O75093</id>
        <label>SLIT1</label>
    </interactant>
    <organismsDiffer>false</organismsDiffer>
    <experiments>3</experiments>
</comment>
<comment type="interaction">
    <interactant intactId="EBI-11953846">
        <id>Q52LG2</id>
    </interactant>
    <interactant intactId="EBI-12275818">
        <id>Q53HV7-2</id>
        <label>SMUG1</label>
    </interactant>
    <organismsDiffer>false</organismsDiffer>
    <experiments>3</experiments>
</comment>
<comment type="interaction">
    <interactant intactId="EBI-11953846">
        <id>Q52LG2</id>
    </interactant>
    <interactant intactId="EBI-766589">
        <id>P09234</id>
        <label>SNRPC</label>
    </interactant>
    <organismsDiffer>false</organismsDiffer>
    <experiments>3</experiments>
</comment>
<comment type="interaction">
    <interactant intactId="EBI-11953846">
        <id>Q52LG2</id>
    </interactant>
    <interactant intactId="EBI-12303571">
        <id>Q9Y4P9-2</id>
        <label>SPEF1</label>
    </interactant>
    <organismsDiffer>false</organismsDiffer>
    <experiments>3</experiments>
</comment>
<comment type="interaction">
    <interactant intactId="EBI-11953846">
        <id>Q52LG2</id>
    </interactant>
    <interactant intactId="EBI-743976">
        <id>Q96LM6</id>
        <label>SPMIP9</label>
    </interactant>
    <organismsDiffer>false</organismsDiffer>
    <experiments>3</experiments>
</comment>
<comment type="interaction">
    <interactant intactId="EBI-11953846">
        <id>Q52LG2</id>
    </interactant>
    <interactant intactId="EBI-749295">
        <id>O75716</id>
        <label>STK16</label>
    </interactant>
    <organismsDiffer>false</organismsDiffer>
    <experiments>3</experiments>
</comment>
<comment type="interaction">
    <interactant intactId="EBI-11953846">
        <id>Q52LG2</id>
    </interactant>
    <interactant intactId="EBI-11974855">
        <id>Q9Y4C2-2</id>
        <label>TCAF1</label>
    </interactant>
    <organismsDiffer>false</organismsDiffer>
    <experiments>3</experiments>
</comment>
<comment type="interaction">
    <interactant intactId="EBI-11953846">
        <id>Q52LG2</id>
    </interactant>
    <interactant intactId="EBI-11741437">
        <id>Q08117-2</id>
        <label>TLE5</label>
    </interactant>
    <organismsDiffer>false</organismsDiffer>
    <experiments>3</experiments>
</comment>
<comment type="interaction">
    <interactant intactId="EBI-11953846">
        <id>Q52LG2</id>
    </interactant>
    <interactant intactId="EBI-949753">
        <id>Q63HR2</id>
        <label>TNS2</label>
    </interactant>
    <organismsDiffer>false</organismsDiffer>
    <experiments>3</experiments>
</comment>
<comment type="interaction">
    <interactant intactId="EBI-11953846">
        <id>Q52LG2</id>
    </interactant>
    <interactant intactId="EBI-8451480">
        <id>O75865-2</id>
        <label>TRAPPC6A</label>
    </interactant>
    <organismsDiffer>false</organismsDiffer>
    <experiments>3</experiments>
</comment>
<comment type="interaction">
    <interactant intactId="EBI-11953846">
        <id>Q52LG2</id>
    </interactant>
    <interactant intactId="EBI-2130449">
        <id>Q6AZZ1</id>
        <label>TRIM68</label>
    </interactant>
    <organismsDiffer>false</organismsDiffer>
    <experiments>3</experiments>
</comment>
<comment type="interaction">
    <interactant intactId="EBI-11953846">
        <id>Q52LG2</id>
    </interactant>
    <interactant intactId="EBI-12023322">
        <id>Q8N831</id>
        <label>TSPYL6</label>
    </interactant>
    <organismsDiffer>false</organismsDiffer>
    <experiments>3</experiments>
</comment>
<comment type="interaction">
    <interactant intactId="EBI-11953846">
        <id>Q52LG2</id>
    </interactant>
    <interactant intactId="EBI-3918381">
        <id>Q96PN8</id>
        <label>TSSK3</label>
    </interactant>
    <organismsDiffer>false</organismsDiffer>
    <experiments>3</experiments>
</comment>
<comment type="interaction">
    <interactant intactId="EBI-11953846">
        <id>Q52LG2</id>
    </interactant>
    <interactant intactId="EBI-12238241">
        <id>Q8IV45</id>
        <label>UNC5CL</label>
    </interactant>
    <organismsDiffer>false</organismsDiffer>
    <experiments>3</experiments>
</comment>
<comment type="interaction">
    <interactant intactId="EBI-11953846">
        <id>Q52LG2</id>
    </interactant>
    <interactant intactId="EBI-11957216">
        <id>A8MV65-2</id>
        <label>VGLL3</label>
    </interactant>
    <organismsDiffer>false</organismsDiffer>
    <experiments>3</experiments>
</comment>
<comment type="interaction">
    <interactant intactId="EBI-11953846">
        <id>Q52LG2</id>
    </interactant>
    <interactant intactId="EBI-11957238">
        <id>Q2TAL6</id>
        <label>VWC2</label>
    </interactant>
    <organismsDiffer>false</organismsDiffer>
    <experiments>3</experiments>
</comment>
<comment type="interaction">
    <interactant intactId="EBI-11953846">
        <id>Q52LG2</id>
    </interactant>
    <interactant intactId="EBI-11963196">
        <id>Q15915</id>
        <label>ZIC1</label>
    </interactant>
    <organismsDiffer>false</organismsDiffer>
    <experiments>3</experiments>
</comment>
<comment type="similarity">
    <text evidence="2">Belongs to the PMG family.</text>
</comment>
<dbReference type="EMBL" id="AB096938">
    <property type="protein sequence ID" value="BAE46353.1"/>
    <property type="molecule type" value="mRNA"/>
</dbReference>
<dbReference type="EMBL" id="BC093934">
    <property type="protein sequence ID" value="AAH93934.1"/>
    <property type="molecule type" value="mRNA"/>
</dbReference>
<dbReference type="EMBL" id="BC093936">
    <property type="protein sequence ID" value="AAH93936.1"/>
    <property type="molecule type" value="mRNA"/>
</dbReference>
<dbReference type="CCDS" id="CCDS13589.1"/>
<dbReference type="RefSeq" id="NP_853652.1">
    <property type="nucleotide sequence ID" value="NM_181621.4"/>
</dbReference>
<dbReference type="BioGRID" id="130644">
    <property type="interactions" value="109"/>
</dbReference>
<dbReference type="FunCoup" id="Q52LG2">
    <property type="interactions" value="38"/>
</dbReference>
<dbReference type="IntAct" id="Q52LG2">
    <property type="interactions" value="93"/>
</dbReference>
<dbReference type="STRING" id="9606.ENSP00000382777"/>
<dbReference type="iPTMnet" id="Q52LG2"/>
<dbReference type="PhosphoSitePlus" id="Q52LG2"/>
<dbReference type="BioMuta" id="KRTAP13-2"/>
<dbReference type="DMDM" id="74735807"/>
<dbReference type="MassIVE" id="Q52LG2"/>
<dbReference type="PaxDb" id="9606-ENSP00000382777"/>
<dbReference type="PeptideAtlas" id="Q52LG2"/>
<dbReference type="PRIDE" id="Q52LG2"/>
<dbReference type="ProteomicsDB" id="62423"/>
<dbReference type="Antibodypedia" id="81633">
    <property type="antibodies" value="1 antibodies from 1 providers"/>
</dbReference>
<dbReference type="DNASU" id="337959"/>
<dbReference type="Ensembl" id="ENST00000399889.4">
    <property type="protein sequence ID" value="ENSP00000382777.2"/>
    <property type="gene ID" value="ENSG00000182816.9"/>
</dbReference>
<dbReference type="GeneID" id="337959"/>
<dbReference type="KEGG" id="hsa:337959"/>
<dbReference type="MANE-Select" id="ENST00000399889.4">
    <property type="protein sequence ID" value="ENSP00000382777.2"/>
    <property type="RefSeq nucleotide sequence ID" value="NM_181621.4"/>
    <property type="RefSeq protein sequence ID" value="NP_853652.1"/>
</dbReference>
<dbReference type="UCSC" id="uc002ynz.5">
    <property type="organism name" value="human"/>
</dbReference>
<dbReference type="AGR" id="HGNC:18923"/>
<dbReference type="CTD" id="337959"/>
<dbReference type="GeneCards" id="KRTAP13-2"/>
<dbReference type="HGNC" id="HGNC:18923">
    <property type="gene designation" value="KRTAP13-2"/>
</dbReference>
<dbReference type="HPA" id="ENSG00000182816">
    <property type="expression patterns" value="Tissue enriched (skin)"/>
</dbReference>
<dbReference type="neXtProt" id="NX_Q52LG2"/>
<dbReference type="OpenTargets" id="ENSG00000182816"/>
<dbReference type="PharmGKB" id="PA134994193"/>
<dbReference type="VEuPathDB" id="HostDB:ENSG00000182816"/>
<dbReference type="eggNOG" id="ENOG502STG2">
    <property type="taxonomic scope" value="Eukaryota"/>
</dbReference>
<dbReference type="GeneTree" id="ENSGT00940000162756"/>
<dbReference type="HOGENOM" id="CLU_111618_0_0_1"/>
<dbReference type="InParanoid" id="Q52LG2"/>
<dbReference type="OMA" id="QEICWEP"/>
<dbReference type="OrthoDB" id="9626821at2759"/>
<dbReference type="PAN-GO" id="Q52LG2">
    <property type="GO annotations" value="0 GO annotations based on evolutionary models"/>
</dbReference>
<dbReference type="PhylomeDB" id="Q52LG2"/>
<dbReference type="TreeFam" id="TF337331"/>
<dbReference type="PathwayCommons" id="Q52LG2"/>
<dbReference type="Reactome" id="R-HSA-6805567">
    <property type="pathway name" value="Keratinization"/>
</dbReference>
<dbReference type="SignaLink" id="Q52LG2"/>
<dbReference type="BioGRID-ORCS" id="337959">
    <property type="hits" value="11 hits in 1135 CRISPR screens"/>
</dbReference>
<dbReference type="GenomeRNAi" id="337959"/>
<dbReference type="Pharos" id="Q52LG2">
    <property type="development level" value="Tdark"/>
</dbReference>
<dbReference type="PRO" id="PR:Q52LG2"/>
<dbReference type="Proteomes" id="UP000005640">
    <property type="component" value="Chromosome 21"/>
</dbReference>
<dbReference type="RNAct" id="Q52LG2">
    <property type="molecule type" value="protein"/>
</dbReference>
<dbReference type="Bgee" id="ENSG00000182816">
    <property type="expression patterns" value="Expressed in rectum and 26 other cell types or tissues"/>
</dbReference>
<dbReference type="GO" id="GO:0005829">
    <property type="term" value="C:cytosol"/>
    <property type="evidence" value="ECO:0000304"/>
    <property type="project" value="Reactome"/>
</dbReference>
<dbReference type="GO" id="GO:0045095">
    <property type="term" value="C:keratin filament"/>
    <property type="evidence" value="ECO:0007669"/>
    <property type="project" value="InterPro"/>
</dbReference>
<dbReference type="GO" id="GO:0005198">
    <property type="term" value="F:structural molecule activity"/>
    <property type="evidence" value="ECO:0007669"/>
    <property type="project" value="InterPro"/>
</dbReference>
<dbReference type="InterPro" id="IPR007659">
    <property type="entry name" value="Keratin_matx"/>
</dbReference>
<dbReference type="InterPro" id="IPR007951">
    <property type="entry name" value="KRTAP_PMG"/>
</dbReference>
<dbReference type="PANTHER" id="PTHR23260">
    <property type="entry name" value="KERATIN ASSOCIATED PROTEIN 3-3-RELATED"/>
    <property type="match status" value="1"/>
</dbReference>
<dbReference type="PANTHER" id="PTHR23260:SF7">
    <property type="entry name" value="KERATIN-ASSOCIATED PROTEIN 26-1"/>
    <property type="match status" value="1"/>
</dbReference>
<dbReference type="Pfam" id="PF05287">
    <property type="entry name" value="PMG"/>
    <property type="match status" value="1"/>
</dbReference>
<gene>
    <name type="primary">KRTAP13-2</name>
    <name type="synonym">KAP13.2</name>
</gene>
<reference key="1">
    <citation type="submission" date="2002-11" db="EMBL/GenBank/DDBJ databases">
        <title>Identification of complete keratin-associated protein (KAP) gene cluster spanning 800 kb region on human chromosome 21q22.11.</title>
        <authorList>
            <person name="Obayashi I."/>
            <person name="Shibuya K."/>
            <person name="Minoshima S."/>
            <person name="Kudoh J."/>
            <person name="Shimizu N."/>
        </authorList>
    </citation>
    <scope>NUCLEOTIDE SEQUENCE [MRNA]</scope>
    <source>
        <tissue>Hair root</tissue>
    </source>
</reference>
<reference key="2">
    <citation type="journal article" date="2004" name="Genome Res.">
        <title>The status, quality, and expansion of the NIH full-length cDNA project: the Mammalian Gene Collection (MGC).</title>
        <authorList>
            <consortium name="The MGC Project Team"/>
        </authorList>
    </citation>
    <scope>NUCLEOTIDE SEQUENCE [LARGE SCALE MRNA]</scope>
</reference>
<organism>
    <name type="scientific">Homo sapiens</name>
    <name type="common">Human</name>
    <dbReference type="NCBI Taxonomy" id="9606"/>
    <lineage>
        <taxon>Eukaryota</taxon>
        <taxon>Metazoa</taxon>
        <taxon>Chordata</taxon>
        <taxon>Craniata</taxon>
        <taxon>Vertebrata</taxon>
        <taxon>Euteleostomi</taxon>
        <taxon>Mammalia</taxon>
        <taxon>Eutheria</taxon>
        <taxon>Euarchontoglires</taxon>
        <taxon>Primates</taxon>
        <taxon>Haplorrhini</taxon>
        <taxon>Catarrhini</taxon>
        <taxon>Hominidae</taxon>
        <taxon>Homo</taxon>
    </lineage>
</organism>
<feature type="chain" id="PRO_0000185201" description="Keratin-associated protein 13-2">
    <location>
        <begin position="1"/>
        <end position="175"/>
    </location>
</feature>
<feature type="repeat" description="1">
    <location>
        <begin position="46"/>
        <end position="55"/>
    </location>
</feature>
<feature type="repeat" description="2">
    <location>
        <begin position="56"/>
        <end position="65"/>
    </location>
</feature>
<feature type="repeat" description="3">
    <location>
        <begin position="66"/>
        <end position="75"/>
    </location>
</feature>
<feature type="repeat" description="4">
    <location>
        <begin position="76"/>
        <end position="85"/>
    </location>
</feature>
<feature type="repeat" description="5">
    <location>
        <begin position="92"/>
        <end position="101"/>
    </location>
</feature>
<feature type="region of interest" description="5 X 10 AA approximate repeats">
    <location>
        <begin position="46"/>
        <end position="101"/>
    </location>
</feature>
<feature type="sequence variant" id="VAR_053470" description="In dbSNP:rs16986753.">
    <original>R</original>
    <variation>C</variation>
    <location>
        <position position="26"/>
    </location>
</feature>
<feature type="sequence variant" id="VAR_053471" description="In dbSNP:rs3804010.">
    <original>S</original>
    <variation>R</variation>
    <location>
        <position position="74"/>
    </location>
</feature>